<reference key="1">
    <citation type="journal article" date="1999" name="Genomics">
        <title>PHTF, a novel atypical homeobox gene on chromosome 1p13, is evolutionarily conserved.</title>
        <authorList>
            <person name="Raich N."/>
            <person name="Mattei M.-G."/>
            <person name="Romeo P.-H."/>
            <person name="Beaupain D."/>
        </authorList>
    </citation>
    <scope>NUCLEOTIDE SEQUENCE [MRNA] (ISOFORM 1)</scope>
    <source>
        <tissue>Erythroleukemia</tissue>
    </source>
</reference>
<reference key="2">
    <citation type="journal article" date="2006" name="Nature">
        <title>The DNA sequence and biological annotation of human chromosome 1.</title>
        <authorList>
            <person name="Gregory S.G."/>
            <person name="Barlow K.F."/>
            <person name="McLay K.E."/>
            <person name="Kaul R."/>
            <person name="Swarbreck D."/>
            <person name="Dunham A."/>
            <person name="Scott C.E."/>
            <person name="Howe K.L."/>
            <person name="Woodfine K."/>
            <person name="Spencer C.C.A."/>
            <person name="Jones M.C."/>
            <person name="Gillson C."/>
            <person name="Searle S."/>
            <person name="Zhou Y."/>
            <person name="Kokocinski F."/>
            <person name="McDonald L."/>
            <person name="Evans R."/>
            <person name="Phillips K."/>
            <person name="Atkinson A."/>
            <person name="Cooper R."/>
            <person name="Jones C."/>
            <person name="Hall R.E."/>
            <person name="Andrews T.D."/>
            <person name="Lloyd C."/>
            <person name="Ainscough R."/>
            <person name="Almeida J.P."/>
            <person name="Ambrose K.D."/>
            <person name="Anderson F."/>
            <person name="Andrew R.W."/>
            <person name="Ashwell R.I.S."/>
            <person name="Aubin K."/>
            <person name="Babbage A.K."/>
            <person name="Bagguley C.L."/>
            <person name="Bailey J."/>
            <person name="Beasley H."/>
            <person name="Bethel G."/>
            <person name="Bird C.P."/>
            <person name="Bray-Allen S."/>
            <person name="Brown J.Y."/>
            <person name="Brown A.J."/>
            <person name="Buckley D."/>
            <person name="Burton J."/>
            <person name="Bye J."/>
            <person name="Carder C."/>
            <person name="Chapman J.C."/>
            <person name="Clark S.Y."/>
            <person name="Clarke G."/>
            <person name="Clee C."/>
            <person name="Cobley V."/>
            <person name="Collier R.E."/>
            <person name="Corby N."/>
            <person name="Coville G.J."/>
            <person name="Davies J."/>
            <person name="Deadman R."/>
            <person name="Dunn M."/>
            <person name="Earthrowl M."/>
            <person name="Ellington A.G."/>
            <person name="Errington H."/>
            <person name="Frankish A."/>
            <person name="Frankland J."/>
            <person name="French L."/>
            <person name="Garner P."/>
            <person name="Garnett J."/>
            <person name="Gay L."/>
            <person name="Ghori M.R.J."/>
            <person name="Gibson R."/>
            <person name="Gilby L.M."/>
            <person name="Gillett W."/>
            <person name="Glithero R.J."/>
            <person name="Grafham D.V."/>
            <person name="Griffiths C."/>
            <person name="Griffiths-Jones S."/>
            <person name="Grocock R."/>
            <person name="Hammond S."/>
            <person name="Harrison E.S.I."/>
            <person name="Hart E."/>
            <person name="Haugen E."/>
            <person name="Heath P.D."/>
            <person name="Holmes S."/>
            <person name="Holt K."/>
            <person name="Howden P.J."/>
            <person name="Hunt A.R."/>
            <person name="Hunt S.E."/>
            <person name="Hunter G."/>
            <person name="Isherwood J."/>
            <person name="James R."/>
            <person name="Johnson C."/>
            <person name="Johnson D."/>
            <person name="Joy A."/>
            <person name="Kay M."/>
            <person name="Kershaw J.K."/>
            <person name="Kibukawa M."/>
            <person name="Kimberley A.M."/>
            <person name="King A."/>
            <person name="Knights A.J."/>
            <person name="Lad H."/>
            <person name="Laird G."/>
            <person name="Lawlor S."/>
            <person name="Leongamornlert D.A."/>
            <person name="Lloyd D.M."/>
            <person name="Loveland J."/>
            <person name="Lovell J."/>
            <person name="Lush M.J."/>
            <person name="Lyne R."/>
            <person name="Martin S."/>
            <person name="Mashreghi-Mohammadi M."/>
            <person name="Matthews L."/>
            <person name="Matthews N.S.W."/>
            <person name="McLaren S."/>
            <person name="Milne S."/>
            <person name="Mistry S."/>
            <person name="Moore M.J.F."/>
            <person name="Nickerson T."/>
            <person name="O'Dell C.N."/>
            <person name="Oliver K."/>
            <person name="Palmeiri A."/>
            <person name="Palmer S.A."/>
            <person name="Parker A."/>
            <person name="Patel D."/>
            <person name="Pearce A.V."/>
            <person name="Peck A.I."/>
            <person name="Pelan S."/>
            <person name="Phelps K."/>
            <person name="Phillimore B.J."/>
            <person name="Plumb R."/>
            <person name="Rajan J."/>
            <person name="Raymond C."/>
            <person name="Rouse G."/>
            <person name="Saenphimmachak C."/>
            <person name="Sehra H.K."/>
            <person name="Sheridan E."/>
            <person name="Shownkeen R."/>
            <person name="Sims S."/>
            <person name="Skuce C.D."/>
            <person name="Smith M."/>
            <person name="Steward C."/>
            <person name="Subramanian S."/>
            <person name="Sycamore N."/>
            <person name="Tracey A."/>
            <person name="Tromans A."/>
            <person name="Van Helmond Z."/>
            <person name="Wall M."/>
            <person name="Wallis J.M."/>
            <person name="White S."/>
            <person name="Whitehead S.L."/>
            <person name="Wilkinson J.E."/>
            <person name="Willey D.L."/>
            <person name="Williams H."/>
            <person name="Wilming L."/>
            <person name="Wray P.W."/>
            <person name="Wu Z."/>
            <person name="Coulson A."/>
            <person name="Vaudin M."/>
            <person name="Sulston J.E."/>
            <person name="Durbin R.M."/>
            <person name="Hubbard T."/>
            <person name="Wooster R."/>
            <person name="Dunham I."/>
            <person name="Carter N.P."/>
            <person name="McVean G."/>
            <person name="Ross M.T."/>
            <person name="Harrow J."/>
            <person name="Olson M.V."/>
            <person name="Beck S."/>
            <person name="Rogers J."/>
            <person name="Bentley D.R."/>
        </authorList>
    </citation>
    <scope>NUCLEOTIDE SEQUENCE [LARGE SCALE GENOMIC DNA]</scope>
</reference>
<reference key="3">
    <citation type="journal article" date="2004" name="Genome Res.">
        <title>The status, quality, and expansion of the NIH full-length cDNA project: the Mammalian Gene Collection (MGC).</title>
        <authorList>
            <consortium name="The MGC Project Team"/>
        </authorList>
    </citation>
    <scope>NUCLEOTIDE SEQUENCE [LARGE SCALE MRNA] (ISOFORM 2)</scope>
    <source>
        <tissue>Skin</tissue>
    </source>
</reference>
<reference key="4">
    <citation type="journal article" date="2000" name="Genomics">
        <title>Molecular characterization of a novel gene family (PHTF) conserved from Drosophila to mammals.</title>
        <authorList>
            <person name="Manuel A."/>
            <person name="Beaupain D."/>
            <person name="Romeo P.-H."/>
            <person name="Raich N."/>
        </authorList>
    </citation>
    <scope>TISSUE SPECIFICITY</scope>
</reference>
<evidence type="ECO:0000250" key="1">
    <source>
        <dbReference type="UniProtKB" id="F1M8G0"/>
    </source>
</evidence>
<evidence type="ECO:0000250" key="2">
    <source>
        <dbReference type="UniProtKB" id="Q9QZ09"/>
    </source>
</evidence>
<evidence type="ECO:0000255" key="3"/>
<evidence type="ECO:0000256" key="4">
    <source>
        <dbReference type="SAM" id="MobiDB-lite"/>
    </source>
</evidence>
<evidence type="ECO:0000269" key="5">
    <source>
    </source>
</evidence>
<evidence type="ECO:0000303" key="6">
    <source>
    </source>
</evidence>
<evidence type="ECO:0000303" key="7">
    <source>
    </source>
</evidence>
<evidence type="ECO:0000303" key="8">
    <source>
    </source>
</evidence>
<evidence type="ECO:0000305" key="9"/>
<evidence type="ECO:0000312" key="10">
    <source>
        <dbReference type="HGNC" id="HGNC:8939"/>
    </source>
</evidence>
<gene>
    <name evidence="7 10" type="primary">PHTF1</name>
    <name evidence="6" type="synonym">PHTF</name>
</gene>
<name>PHTF1_HUMAN</name>
<protein>
    <recommendedName>
        <fullName evidence="9">Protein PHTF1</fullName>
    </recommendedName>
</protein>
<dbReference type="EMBL" id="AJ011863">
    <property type="protein sequence ID" value="CAB51572.1"/>
    <property type="molecule type" value="mRNA"/>
</dbReference>
<dbReference type="EMBL" id="AL365321">
    <property type="status" value="NOT_ANNOTATED_CDS"/>
    <property type="molecule type" value="Genomic_DNA"/>
</dbReference>
<dbReference type="EMBL" id="AL133517">
    <property type="status" value="NOT_ANNOTATED_CDS"/>
    <property type="molecule type" value="Genomic_DNA"/>
</dbReference>
<dbReference type="EMBL" id="BC002447">
    <property type="protein sequence ID" value="AAH02447.1"/>
    <property type="molecule type" value="mRNA"/>
</dbReference>
<dbReference type="CCDS" id="CCDS81359.1">
    <molecule id="Q9UMS5-2"/>
</dbReference>
<dbReference type="CCDS" id="CCDS861.1">
    <molecule id="Q9UMS5-1"/>
</dbReference>
<dbReference type="RefSeq" id="NP_001309970.1">
    <molecule id="Q9UMS5-1"/>
    <property type="nucleotide sequence ID" value="NM_001323041.2"/>
</dbReference>
<dbReference type="RefSeq" id="NP_001309971.1">
    <molecule id="Q9UMS5-1"/>
    <property type="nucleotide sequence ID" value="NM_001323042.2"/>
</dbReference>
<dbReference type="RefSeq" id="NP_001309972.1">
    <molecule id="Q9UMS5-1"/>
    <property type="nucleotide sequence ID" value="NM_001323043.2"/>
</dbReference>
<dbReference type="RefSeq" id="NP_001309976.1">
    <molecule id="Q9UMS5-2"/>
    <property type="nucleotide sequence ID" value="NM_001323047.2"/>
</dbReference>
<dbReference type="RefSeq" id="NP_001309977.1">
    <molecule id="Q9UMS5-2"/>
    <property type="nucleotide sequence ID" value="NM_001323048.2"/>
</dbReference>
<dbReference type="RefSeq" id="NP_001309978.1">
    <molecule id="Q9UMS5-2"/>
    <property type="nucleotide sequence ID" value="NM_001323049.2"/>
</dbReference>
<dbReference type="RefSeq" id="NP_006599.2">
    <molecule id="Q9UMS5-1"/>
    <property type="nucleotide sequence ID" value="NM_006608.3"/>
</dbReference>
<dbReference type="SMR" id="Q9UMS5"/>
<dbReference type="BioGRID" id="115968">
    <property type="interactions" value="19"/>
</dbReference>
<dbReference type="FunCoup" id="Q9UMS5">
    <property type="interactions" value="1122"/>
</dbReference>
<dbReference type="IntAct" id="Q9UMS5">
    <property type="interactions" value="7"/>
</dbReference>
<dbReference type="MINT" id="Q9UMS5"/>
<dbReference type="STRING" id="9606.ENSP00000358617"/>
<dbReference type="TCDB" id="1.A.152.1.2">
    <property type="family name" value="the putative ion channel-receptor (picr) family"/>
</dbReference>
<dbReference type="GlyCosmos" id="Q9UMS5">
    <property type="glycosylation" value="6 sites, No reported glycans"/>
</dbReference>
<dbReference type="GlyGen" id="Q9UMS5">
    <property type="glycosylation" value="9 sites, 1 N-linked glycan (1 site), 1 O-linked glycan (3 sites)"/>
</dbReference>
<dbReference type="iPTMnet" id="Q9UMS5"/>
<dbReference type="PhosphoSitePlus" id="Q9UMS5"/>
<dbReference type="BioMuta" id="PHTF1"/>
<dbReference type="DMDM" id="71152973"/>
<dbReference type="jPOST" id="Q9UMS5"/>
<dbReference type="MassIVE" id="Q9UMS5"/>
<dbReference type="PaxDb" id="9606-ENSP00000358617"/>
<dbReference type="PeptideAtlas" id="Q9UMS5"/>
<dbReference type="ProteomicsDB" id="85208">
    <molecule id="Q9UMS5-1"/>
</dbReference>
<dbReference type="ProteomicsDB" id="85209">
    <molecule id="Q9UMS5-2"/>
</dbReference>
<dbReference type="Antibodypedia" id="20143">
    <property type="antibodies" value="32 antibodies from 14 providers"/>
</dbReference>
<dbReference type="DNASU" id="10745"/>
<dbReference type="Ensembl" id="ENST00000357783.6">
    <molecule id="Q9UMS5-2"/>
    <property type="protein sequence ID" value="ENSP00000350428.2"/>
    <property type="gene ID" value="ENSG00000116793.16"/>
</dbReference>
<dbReference type="Ensembl" id="ENST00000369604.6">
    <molecule id="Q9UMS5-1"/>
    <property type="protein sequence ID" value="ENSP00000358617.1"/>
    <property type="gene ID" value="ENSG00000116793.16"/>
</dbReference>
<dbReference type="Ensembl" id="ENST00000393357.6">
    <molecule id="Q9UMS5-1"/>
    <property type="protein sequence ID" value="ENSP00000377025.2"/>
    <property type="gene ID" value="ENSG00000116793.16"/>
</dbReference>
<dbReference type="GeneID" id="10745"/>
<dbReference type="KEGG" id="hsa:10745"/>
<dbReference type="MANE-Select" id="ENST00000369604.6">
    <property type="protein sequence ID" value="ENSP00000358617.1"/>
    <property type="RefSeq nucleotide sequence ID" value="NM_001323043.2"/>
    <property type="RefSeq protein sequence ID" value="NP_001309972.1"/>
</dbReference>
<dbReference type="UCSC" id="uc001edn.4">
    <molecule id="Q9UMS5-1"/>
    <property type="organism name" value="human"/>
</dbReference>
<dbReference type="AGR" id="HGNC:8939"/>
<dbReference type="CTD" id="10745"/>
<dbReference type="DisGeNET" id="10745"/>
<dbReference type="GeneCards" id="PHTF1"/>
<dbReference type="HGNC" id="HGNC:8939">
    <property type="gene designation" value="PHTF1"/>
</dbReference>
<dbReference type="HPA" id="ENSG00000116793">
    <property type="expression patterns" value="Low tissue specificity"/>
</dbReference>
<dbReference type="MIM" id="604950">
    <property type="type" value="gene"/>
</dbReference>
<dbReference type="neXtProt" id="NX_Q9UMS5"/>
<dbReference type="OpenTargets" id="ENSG00000116793"/>
<dbReference type="PharmGKB" id="PA33278"/>
<dbReference type="VEuPathDB" id="HostDB:ENSG00000116793"/>
<dbReference type="eggNOG" id="ENOG502QQGQ">
    <property type="taxonomic scope" value="Eukaryota"/>
</dbReference>
<dbReference type="GeneTree" id="ENSGT00390000011648"/>
<dbReference type="InParanoid" id="Q9UMS5"/>
<dbReference type="OMA" id="KMWQTRE"/>
<dbReference type="OrthoDB" id="10066656at2759"/>
<dbReference type="PAN-GO" id="Q9UMS5">
    <property type="GO annotations" value="0 GO annotations based on evolutionary models"/>
</dbReference>
<dbReference type="PhylomeDB" id="Q9UMS5"/>
<dbReference type="TreeFam" id="TF323570"/>
<dbReference type="PathwayCommons" id="Q9UMS5"/>
<dbReference type="SignaLink" id="Q9UMS5"/>
<dbReference type="BioGRID-ORCS" id="10745">
    <property type="hits" value="12 hits in 1157 CRISPR screens"/>
</dbReference>
<dbReference type="ChiTaRS" id="PHTF1">
    <property type="organism name" value="human"/>
</dbReference>
<dbReference type="GenomeRNAi" id="10745"/>
<dbReference type="Pharos" id="Q9UMS5">
    <property type="development level" value="Tdark"/>
</dbReference>
<dbReference type="PRO" id="PR:Q9UMS5"/>
<dbReference type="Proteomes" id="UP000005640">
    <property type="component" value="Chromosome 1"/>
</dbReference>
<dbReference type="RNAct" id="Q9UMS5">
    <property type="molecule type" value="protein"/>
</dbReference>
<dbReference type="Bgee" id="ENSG00000116793">
    <property type="expression patterns" value="Expressed in right hemisphere of cerebellum and 147 other cell types or tissues"/>
</dbReference>
<dbReference type="ExpressionAtlas" id="Q9UMS5">
    <property type="expression patterns" value="baseline and differential"/>
</dbReference>
<dbReference type="GO" id="GO:0005789">
    <property type="term" value="C:endoplasmic reticulum membrane"/>
    <property type="evidence" value="ECO:0007669"/>
    <property type="project" value="UniProtKB-SubCell"/>
</dbReference>
<dbReference type="GO" id="GO:0005794">
    <property type="term" value="C:Golgi apparatus"/>
    <property type="evidence" value="ECO:0007669"/>
    <property type="project" value="UniProtKB-SubCell"/>
</dbReference>
<dbReference type="InterPro" id="IPR039775">
    <property type="entry name" value="PHTF1/2"/>
</dbReference>
<dbReference type="InterPro" id="IPR021980">
    <property type="entry name" value="PHTF1/2_N"/>
</dbReference>
<dbReference type="PANTHER" id="PTHR12680:SF8">
    <property type="entry name" value="PROTEIN PHTF1"/>
    <property type="match status" value="1"/>
</dbReference>
<dbReference type="PANTHER" id="PTHR12680">
    <property type="entry name" value="PUTATIVE HOMEODOMAIN TRANSCRIPTION FACTOR PHTF"/>
    <property type="match status" value="1"/>
</dbReference>
<dbReference type="Pfam" id="PF12129">
    <property type="entry name" value="PHTF1-2_N"/>
    <property type="match status" value="1"/>
</dbReference>
<keyword id="KW-0025">Alternative splicing</keyword>
<keyword id="KW-0256">Endoplasmic reticulum</keyword>
<keyword id="KW-0325">Glycoprotein</keyword>
<keyword id="KW-0333">Golgi apparatus</keyword>
<keyword id="KW-0472">Membrane</keyword>
<keyword id="KW-0597">Phosphoprotein</keyword>
<keyword id="KW-1267">Proteomics identification</keyword>
<keyword id="KW-1185">Reference proteome</keyword>
<keyword id="KW-0812">Transmembrane</keyword>
<keyword id="KW-1133">Transmembrane helix</keyword>
<organism>
    <name type="scientific">Homo sapiens</name>
    <name type="common">Human</name>
    <dbReference type="NCBI Taxonomy" id="9606"/>
    <lineage>
        <taxon>Eukaryota</taxon>
        <taxon>Metazoa</taxon>
        <taxon>Chordata</taxon>
        <taxon>Craniata</taxon>
        <taxon>Vertebrata</taxon>
        <taxon>Euteleostomi</taxon>
        <taxon>Mammalia</taxon>
        <taxon>Eutheria</taxon>
        <taxon>Euarchontoglires</taxon>
        <taxon>Primates</taxon>
        <taxon>Haplorrhini</taxon>
        <taxon>Catarrhini</taxon>
        <taxon>Hominidae</taxon>
        <taxon>Homo</taxon>
    </lineage>
</organism>
<feature type="chain" id="PRO_0000127423" description="Protein PHTF1">
    <location>
        <begin position="1"/>
        <end position="762"/>
    </location>
</feature>
<feature type="transmembrane region" description="Helical" evidence="3">
    <location>
        <begin position="77"/>
        <end position="97"/>
    </location>
</feature>
<feature type="transmembrane region" description="Helical" evidence="3">
    <location>
        <begin position="99"/>
        <end position="119"/>
    </location>
</feature>
<feature type="transmembrane region" description="Helical" evidence="3">
    <location>
        <begin position="121"/>
        <end position="141"/>
    </location>
</feature>
<feature type="transmembrane region" description="Helical" evidence="3">
    <location>
        <begin position="473"/>
        <end position="493"/>
    </location>
</feature>
<feature type="transmembrane region" description="Helical" evidence="3">
    <location>
        <begin position="512"/>
        <end position="532"/>
    </location>
</feature>
<feature type="transmembrane region" description="Helical" evidence="3">
    <location>
        <begin position="611"/>
        <end position="631"/>
    </location>
</feature>
<feature type="transmembrane region" description="Helical" evidence="3">
    <location>
        <begin position="645"/>
        <end position="665"/>
    </location>
</feature>
<feature type="transmembrane region" description="Helical" evidence="3">
    <location>
        <begin position="737"/>
        <end position="757"/>
    </location>
</feature>
<feature type="domain" description="PHTF" evidence="3">
    <location>
        <begin position="6"/>
        <end position="150"/>
    </location>
</feature>
<feature type="region of interest" description="Disordered" evidence="4">
    <location>
        <begin position="152"/>
        <end position="184"/>
    </location>
</feature>
<feature type="region of interest" description="Disordered" evidence="4">
    <location>
        <begin position="344"/>
        <end position="380"/>
    </location>
</feature>
<feature type="region of interest" description="Disordered" evidence="4">
    <location>
        <begin position="393"/>
        <end position="415"/>
    </location>
</feature>
<feature type="compositionally biased region" description="Low complexity" evidence="4">
    <location>
        <begin position="348"/>
        <end position="361"/>
    </location>
</feature>
<feature type="compositionally biased region" description="Basic and acidic residues" evidence="4">
    <location>
        <begin position="365"/>
        <end position="376"/>
    </location>
</feature>
<feature type="modified residue" description="Phosphoserine" evidence="2">
    <location>
        <position position="272"/>
    </location>
</feature>
<feature type="modified residue" description="Phosphoserine" evidence="2">
    <location>
        <position position="276"/>
    </location>
</feature>
<feature type="modified residue" description="Phosphoserine" evidence="2">
    <location>
        <position position="277"/>
    </location>
</feature>
<feature type="modified residue" description="Phosphoserine" evidence="2">
    <location>
        <position position="334"/>
    </location>
</feature>
<feature type="modified residue" description="Phosphoserine" evidence="2">
    <location>
        <position position="336"/>
    </location>
</feature>
<feature type="glycosylation site" description="N-linked (GlcNAc...) asparagine" evidence="3">
    <location>
        <position position="179"/>
    </location>
</feature>
<feature type="glycosylation site" description="N-linked (GlcNAc...) asparagine" evidence="3">
    <location>
        <position position="180"/>
    </location>
</feature>
<feature type="glycosylation site" description="N-linked (GlcNAc...) asparagine" evidence="3">
    <location>
        <position position="363"/>
    </location>
</feature>
<feature type="glycosylation site" description="N-linked (GlcNAc...) asparagine" evidence="3">
    <location>
        <position position="431"/>
    </location>
</feature>
<feature type="glycosylation site" description="N-linked (GlcNAc...) asparagine" evidence="3">
    <location>
        <position position="674"/>
    </location>
</feature>
<feature type="glycosylation site" description="N-linked (GlcNAc...) asparagine" evidence="3">
    <location>
        <position position="733"/>
    </location>
</feature>
<feature type="splice variant" id="VSP_002144" description="In isoform 2." evidence="8">
    <original>LQGHKT</original>
    <variation>KVSHLL</variation>
    <location>
        <begin position="632"/>
        <end position="637"/>
    </location>
</feature>
<feature type="splice variant" id="VSP_002145" description="In isoform 2." evidence="8">
    <location>
        <begin position="638"/>
        <end position="762"/>
    </location>
</feature>
<feature type="sequence conflict" description="In Ref. 1; CAB51572." evidence="9" ref="1">
    <original>W</original>
    <variation>C</variation>
    <location>
        <position position="245"/>
    </location>
</feature>
<feature type="sequence conflict" description="In Ref. 1; CAB51572." evidence="9" ref="1">
    <original>A</original>
    <variation>P</variation>
    <location>
        <position position="251"/>
    </location>
</feature>
<feature type="sequence conflict" description="In Ref. 1; CAB51572." evidence="9" ref="1">
    <original>C</original>
    <variation>G</variation>
    <location>
        <position position="518"/>
    </location>
</feature>
<feature type="sequence conflict" description="In Ref. 1; CAB51572." evidence="9" ref="1">
    <original>L</original>
    <variation>W</variation>
    <location>
        <position position="529"/>
    </location>
</feature>
<feature type="sequence conflict" description="In Ref. 1; CAB51572." evidence="9" ref="1">
    <original>F</original>
    <variation>S</variation>
    <location>
        <position position="638"/>
    </location>
</feature>
<sequence length="762" mass="87252">MASNERDAISWYQKKIGAYDQQIWEKSIEQTQIKGLKNKPKKMGHIKPDLIDVDLIRGSTFAKAKPEIPWTSLTRKGLVRVVFFPLFSNWWIQVTSLRIFVWLLLLYFMQVIAIVLYLMMPIVNISEVLGPLCLMLLMGTVHCQIVSTQITRPSGNNGNRRRRKLRKTVNGDGSRENGNNSSDKVRGIETLESVPIIGGFWETIFGNRIKRVKLISNKGTETDNDPSCVHPIIKRRQCRPEIRMWQTREKAKFSDGEKCRREAFRRLGNGVSDDLSSEEDGEARTQMILLRRSVEGASSDNGCEVKNRKSILSRHLNSQVKKTTTRWCHIVRDSDSLAESEFESAAFSQGSRSGVSGGSRSLNMSRRDSESTRHDSETEDMLWDDLLHGPECRSSVTSDSEGAHVNTLHSGTKRDPKEDVFQQNHLFWLQNSSPSSDRVSAIIWEGNECKKMDMSVLEISGIIMSRVNAYQQGVGYQMLGNVVTIGLAFFPFLHRLFREKSLDQLKSISAEEILTLFCGAPPVTPIIVLSIINFFERLCLTWMFFFMMCVAERTYKQRFLFAKLFSHITSARKARKYEIPHFRLKKVENIKIWLSLRSYLKRRGPQRSVDVVVSSVFLLTLSIAFICCAQVLQGHKTFLNDAYNWEFLIWETALLLFLLRLASLGSETNKKYSNVSILLTEQINLYLKMEKKPNKKEQLTLVNNVLKLSTKLLKELDTPFRLYGLTMNPLIYNITRVVILSAVSGVISDLLGFNIRLWKIKS</sequence>
<comment type="subunit">
    <text evidence="2">Interacts with FEM1B.</text>
</comment>
<comment type="subcellular location">
    <subcellularLocation>
        <location evidence="1">Endoplasmic reticulum membrane</location>
        <topology evidence="3">Multi-pass membrane protein</topology>
    </subcellularLocation>
    <subcellularLocation>
        <location evidence="1">Golgi apparatus</location>
        <location evidence="1">cis-Golgi network membrane</location>
        <topology evidence="3">Multi-pass membrane protein</topology>
    </subcellularLocation>
</comment>
<comment type="alternative products">
    <event type="alternative splicing"/>
    <isoform>
        <id>Q9UMS5-1</id>
        <name>1</name>
        <sequence type="displayed"/>
    </isoform>
    <isoform>
        <id>Q9UMS5-2</id>
        <name>2</name>
        <sequence type="described" ref="VSP_002144 VSP_002145"/>
    </isoform>
</comment>
<comment type="tissue specificity">
    <text evidence="5">Widely expressed with highest levels in testis.</text>
</comment>
<comment type="caution">
    <text evidence="1 6">The PHTF domain was initially defined as an atypical homeodomain, suggesting that this protein could act as a transcription regulator (PubMed:10395808). However, the protein is not found in the nucleus and mainly localizes in the endoplasmic reticulum membrane, suggesting that it does not act as a transcription factor (By similarity).</text>
</comment>
<accession>Q9UMS5</accession>
<accession>Q5VWP7</accession>
<accession>Q5VWP8</accession>
<accession>Q9BUP2</accession>
<accession>Q9H1X8</accession>
<proteinExistence type="evidence at protein level"/>